<proteinExistence type="evidence at protein level"/>
<reference key="1">
    <citation type="journal article" date="1995" name="Cell">
        <title>Glycogen synthase kinase 3 regulates cell fate in Dictyostelium.</title>
        <authorList>
            <person name="Harwood A.J."/>
            <person name="Plyte S.E."/>
            <person name="Woodgett J."/>
            <person name="Strutt H."/>
            <person name="Kay R.R."/>
        </authorList>
    </citation>
    <scope>NUCLEOTIDE SEQUENCE [MRNA]</scope>
    <scope>FUNCTION</scope>
    <scope>DISRUPTION PHENOTYPE</scope>
    <source>
        <strain>AX2</strain>
    </source>
</reference>
<reference key="2">
    <citation type="submission" date="2003-12" db="EMBL/GenBank/DDBJ databases">
        <authorList>
            <person name="Harwood A.J."/>
            <person name="Plyte S.E."/>
            <person name="Woodgett J."/>
            <person name="Strutt H."/>
            <person name="Kay R.R."/>
        </authorList>
    </citation>
    <scope>SEQUENCE REVISION</scope>
</reference>
<reference key="3">
    <citation type="journal article" date="2002" name="Nature">
        <title>Sequence and analysis of chromosome 2 of Dictyostelium discoideum.</title>
        <authorList>
            <person name="Gloeckner G."/>
            <person name="Eichinger L."/>
            <person name="Szafranski K."/>
            <person name="Pachebat J.A."/>
            <person name="Bankier A.T."/>
            <person name="Dear P.H."/>
            <person name="Lehmann R."/>
            <person name="Baumgart C."/>
            <person name="Parra G."/>
            <person name="Abril J.F."/>
            <person name="Guigo R."/>
            <person name="Kumpf K."/>
            <person name="Tunggal B."/>
            <person name="Cox E.C."/>
            <person name="Quail M.A."/>
            <person name="Platzer M."/>
            <person name="Rosenthal A."/>
            <person name="Noegel A.A."/>
        </authorList>
    </citation>
    <scope>NUCLEOTIDE SEQUENCE [LARGE SCALE GENOMIC DNA]</scope>
    <source>
        <strain>AX4</strain>
    </source>
</reference>
<reference key="4">
    <citation type="journal article" date="2005" name="Nature">
        <title>The genome of the social amoeba Dictyostelium discoideum.</title>
        <authorList>
            <person name="Eichinger L."/>
            <person name="Pachebat J.A."/>
            <person name="Gloeckner G."/>
            <person name="Rajandream M.A."/>
            <person name="Sucgang R."/>
            <person name="Berriman M."/>
            <person name="Song J."/>
            <person name="Olsen R."/>
            <person name="Szafranski K."/>
            <person name="Xu Q."/>
            <person name="Tunggal B."/>
            <person name="Kummerfeld S."/>
            <person name="Madera M."/>
            <person name="Konfortov B.A."/>
            <person name="Rivero F."/>
            <person name="Bankier A.T."/>
            <person name="Lehmann R."/>
            <person name="Hamlin N."/>
            <person name="Davies R."/>
            <person name="Gaudet P."/>
            <person name="Fey P."/>
            <person name="Pilcher K."/>
            <person name="Chen G."/>
            <person name="Saunders D."/>
            <person name="Sodergren E.J."/>
            <person name="Davis P."/>
            <person name="Kerhornou A."/>
            <person name="Nie X."/>
            <person name="Hall N."/>
            <person name="Anjard C."/>
            <person name="Hemphill L."/>
            <person name="Bason N."/>
            <person name="Farbrother P."/>
            <person name="Desany B."/>
            <person name="Just E."/>
            <person name="Morio T."/>
            <person name="Rost R."/>
            <person name="Churcher C.M."/>
            <person name="Cooper J."/>
            <person name="Haydock S."/>
            <person name="van Driessche N."/>
            <person name="Cronin A."/>
            <person name="Goodhead I."/>
            <person name="Muzny D.M."/>
            <person name="Mourier T."/>
            <person name="Pain A."/>
            <person name="Lu M."/>
            <person name="Harper D."/>
            <person name="Lindsay R."/>
            <person name="Hauser H."/>
            <person name="James K.D."/>
            <person name="Quiles M."/>
            <person name="Madan Babu M."/>
            <person name="Saito T."/>
            <person name="Buchrieser C."/>
            <person name="Wardroper A."/>
            <person name="Felder M."/>
            <person name="Thangavelu M."/>
            <person name="Johnson D."/>
            <person name="Knights A."/>
            <person name="Loulseged H."/>
            <person name="Mungall K.L."/>
            <person name="Oliver K."/>
            <person name="Price C."/>
            <person name="Quail M.A."/>
            <person name="Urushihara H."/>
            <person name="Hernandez J."/>
            <person name="Rabbinowitsch E."/>
            <person name="Steffen D."/>
            <person name="Sanders M."/>
            <person name="Ma J."/>
            <person name="Kohara Y."/>
            <person name="Sharp S."/>
            <person name="Simmonds M.N."/>
            <person name="Spiegler S."/>
            <person name="Tivey A."/>
            <person name="Sugano S."/>
            <person name="White B."/>
            <person name="Walker D."/>
            <person name="Woodward J.R."/>
            <person name="Winckler T."/>
            <person name="Tanaka Y."/>
            <person name="Shaulsky G."/>
            <person name="Schleicher M."/>
            <person name="Weinstock G.M."/>
            <person name="Rosenthal A."/>
            <person name="Cox E.C."/>
            <person name="Chisholm R.L."/>
            <person name="Gibbs R.A."/>
            <person name="Loomis W.F."/>
            <person name="Platzer M."/>
            <person name="Kay R.R."/>
            <person name="Williams J.G."/>
            <person name="Dear P.H."/>
            <person name="Noegel A.A."/>
            <person name="Barrell B.G."/>
            <person name="Kuspa A."/>
        </authorList>
    </citation>
    <scope>NUCLEOTIDE SEQUENCE [LARGE SCALE GENOMIC DNA]</scope>
    <source>
        <strain>AX4</strain>
    </source>
</reference>
<reference key="5">
    <citation type="journal article" date="1997" name="Dev. Biol.">
        <title>Activation of the Wnt signaling pathway: a molecular mechanism for lithium action.</title>
        <authorList>
            <person name="Hedgepeth C.M."/>
            <person name="Conrad L.J."/>
            <person name="Zhang J."/>
            <person name="Huang H.-C."/>
            <person name="Lee V.M.Y."/>
            <person name="Klein P.S."/>
        </authorList>
    </citation>
    <scope>CATALYTIC ACTIVITY</scope>
    <scope>INHIBITION BY LITHIUM</scope>
</reference>
<reference key="6">
    <citation type="journal article" date="1997" name="Genes Dev.">
        <title>Autonomous and nonautonomous regulation of axis formation by antagonistic signaling via 7-span cAMP receptors and GSK3 in Dictyostelium.</title>
        <authorList>
            <person name="Ginsburg G.T."/>
            <person name="Kimmel A.R."/>
        </authorList>
    </citation>
    <scope>FUNCTION</scope>
</reference>
<reference key="7">
    <citation type="journal article" date="1998" name="Anal. Biochem.">
        <title>An assay for glycogen synthase kinase 3 (GSK-3) for use in crude cell extracts.</title>
        <authorList>
            <person name="Ryves W.J."/>
            <person name="Fryer L."/>
            <person name="Dale T."/>
            <person name="Harwood A.J."/>
        </authorList>
    </citation>
    <scope>CATALYTIC ACTIVITY</scope>
    <scope>INHIBITION BY LITHIUM</scope>
</reference>
<reference key="8">
    <citation type="journal article" date="1999" name="Cell">
        <title>The novel tyrosine kinase ZAK1 activates GSK3 to direct cell fate specification.</title>
        <authorList>
            <person name="Kim L."/>
            <person name="Liu J."/>
            <person name="Kimmel A.R."/>
        </authorList>
    </citation>
    <scope>FUNCTION</scope>
</reference>
<reference key="9">
    <citation type="journal article" date="1999" name="Development">
        <title>Glycogen synthase kinase-3 (GSK-3) is regulated during Dictyostelium development via the serpentine receptor cAR3.</title>
        <authorList>
            <person name="Plyte S.E."/>
            <person name="O'Donovan E."/>
            <person name="Woodgett J.R."/>
            <person name="Harwood A.J."/>
        </authorList>
    </citation>
    <scope>FUNCTION</scope>
    <scope>DEVELOPMENTAL STAGE</scope>
</reference>
<reference key="10">
    <citation type="journal article" date="2001" name="Biochem. Biophys. Res. Commun.">
        <title>Lithium inhibits glycogen synthase kinase-3 by competition for magnesium.</title>
        <authorList>
            <person name="Ryves W.J."/>
            <person name="Harwood A.J."/>
        </authorList>
    </citation>
    <scope>CATALYTIC ACTIVITY</scope>
    <scope>COFACTOR REQUIREMENT</scope>
    <scope>INHIBITION BY LITHIUM</scope>
</reference>
<reference key="11">
    <citation type="journal article" date="2002" name="Dev. Cell">
        <title>Receptor-dependent and tyrosine phosphatase-mediated inhibition of GSK3 regulates cell fate choice.</title>
        <authorList>
            <person name="Kim L."/>
            <person name="Harwood A.J."/>
            <person name="Kimmel A.R."/>
        </authorList>
    </citation>
    <scope>FUNCTION</scope>
    <scope>MUTAGENESIS OF LYS-85; LYS-86; TYR-214 AND TYR-220</scope>
    <scope>PHOSPHORYLATION AT TYR-214 AND TYR-220</scope>
</reference>
<reference key="12">
    <citation type="journal article" date="2004" name="Development">
        <title>GSK3 is a multifunctional regulator of Dictyostelium development.</title>
        <authorList>
            <person name="Schilde C."/>
            <person name="Araki T."/>
            <person name="Williams H."/>
            <person name="Harwood A.J."/>
            <person name="Williams J.G."/>
        </authorList>
    </citation>
    <scope>FUNCTION</scope>
    <scope>DISRUPTION PHENOTYPE</scope>
</reference>
<reference key="13">
    <citation type="journal article" date="2011" name="Development">
        <title>Combinatorial cell-specific regulation of GSK3 directs cell differentiation and polarity in Dictyostelium.</title>
        <authorList>
            <person name="Kim L."/>
            <person name="Brzostowski J."/>
            <person name="Majithia A."/>
            <person name="Lee N.S."/>
            <person name="McMains V."/>
            <person name="Kimmel A.R."/>
        </authorList>
    </citation>
    <scope>FUNCTION</scope>
</reference>
<gene>
    <name type="primary">gskA</name>
    <name type="synonym">gsk3</name>
    <name type="ORF">DDB_G0272110</name>
</gene>
<dbReference type="EC" id="2.7.11.26"/>
<dbReference type="EMBL" id="L34674">
    <property type="protein sequence ID" value="AAA65968.2"/>
    <property type="molecule type" value="mRNA"/>
</dbReference>
<dbReference type="EMBL" id="AAFI02000008">
    <property type="protein sequence ID" value="EAL71207.1"/>
    <property type="molecule type" value="Genomic_DNA"/>
</dbReference>
<dbReference type="PIR" id="A55476">
    <property type="entry name" value="A55476"/>
</dbReference>
<dbReference type="RefSeq" id="XP_645156.1">
    <property type="nucleotide sequence ID" value="XM_640064.1"/>
</dbReference>
<dbReference type="SMR" id="P51136"/>
<dbReference type="FunCoup" id="P51136">
    <property type="interactions" value="168"/>
</dbReference>
<dbReference type="STRING" id="44689.P51136"/>
<dbReference type="BindingDB" id="P51136"/>
<dbReference type="ChEMBL" id="CHEMBL2311226"/>
<dbReference type="iPTMnet" id="P51136"/>
<dbReference type="PaxDb" id="44689-DDB0185150"/>
<dbReference type="EnsemblProtists" id="EAL71207">
    <property type="protein sequence ID" value="EAL71207"/>
    <property type="gene ID" value="DDB_G0272110"/>
</dbReference>
<dbReference type="GeneID" id="8618327"/>
<dbReference type="KEGG" id="ddi:DDB_G0272110"/>
<dbReference type="dictyBase" id="DDB_G0272110">
    <property type="gene designation" value="gskA"/>
</dbReference>
<dbReference type="VEuPathDB" id="AmoebaDB:DDB_G0272110"/>
<dbReference type="eggNOG" id="KOG0658">
    <property type="taxonomic scope" value="Eukaryota"/>
</dbReference>
<dbReference type="HOGENOM" id="CLU_000288_181_20_1"/>
<dbReference type="InParanoid" id="P51136"/>
<dbReference type="OMA" id="ARDWKKV"/>
<dbReference type="PhylomeDB" id="P51136"/>
<dbReference type="BRENDA" id="2.7.11.26">
    <property type="organism ID" value="1939"/>
</dbReference>
<dbReference type="Reactome" id="R-DDI-3371453">
    <property type="pathway name" value="Regulation of HSF1-mediated heat shock response"/>
</dbReference>
<dbReference type="PRO" id="PR:P51136"/>
<dbReference type="Proteomes" id="UP000002195">
    <property type="component" value="Chromosome 2"/>
</dbReference>
<dbReference type="GO" id="GO:0005813">
    <property type="term" value="C:centrosome"/>
    <property type="evidence" value="ECO:0000314"/>
    <property type="project" value="dictyBase"/>
</dbReference>
<dbReference type="GO" id="GO:0005737">
    <property type="term" value="C:cytoplasm"/>
    <property type="evidence" value="ECO:0000314"/>
    <property type="project" value="dictyBase"/>
</dbReference>
<dbReference type="GO" id="GO:0072686">
    <property type="term" value="C:mitotic spindle"/>
    <property type="evidence" value="ECO:0000314"/>
    <property type="project" value="dictyBase"/>
</dbReference>
<dbReference type="GO" id="GO:0005634">
    <property type="term" value="C:nucleus"/>
    <property type="evidence" value="ECO:0000318"/>
    <property type="project" value="GO_Central"/>
</dbReference>
<dbReference type="GO" id="GO:0005524">
    <property type="term" value="F:ATP binding"/>
    <property type="evidence" value="ECO:0000314"/>
    <property type="project" value="UniProtKB"/>
</dbReference>
<dbReference type="GO" id="GO:0030695">
    <property type="term" value="F:GTPase regulator activity"/>
    <property type="evidence" value="ECO:0000314"/>
    <property type="project" value="dictyBase"/>
</dbReference>
<dbReference type="GO" id="GO:0004672">
    <property type="term" value="F:protein kinase activity"/>
    <property type="evidence" value="ECO:0000314"/>
    <property type="project" value="dictyBase"/>
</dbReference>
<dbReference type="GO" id="GO:0106310">
    <property type="term" value="F:protein serine kinase activity"/>
    <property type="evidence" value="ECO:0000314"/>
    <property type="project" value="dictyBase"/>
</dbReference>
<dbReference type="GO" id="GO:0004674">
    <property type="term" value="F:protein serine/threonine kinase activity"/>
    <property type="evidence" value="ECO:0000314"/>
    <property type="project" value="dictyBase"/>
</dbReference>
<dbReference type="GO" id="GO:0140582">
    <property type="term" value="P:adenylate cyclase-activating G protein-coupled cAMP receptor signaling pathway"/>
    <property type="evidence" value="ECO:0000315"/>
    <property type="project" value="dictyBase"/>
</dbReference>
<dbReference type="GO" id="GO:0031152">
    <property type="term" value="P:aggregation involved in sorocarp development"/>
    <property type="evidence" value="ECO:0000315"/>
    <property type="project" value="dictyBase"/>
</dbReference>
<dbReference type="GO" id="GO:0030154">
    <property type="term" value="P:cell differentiation"/>
    <property type="evidence" value="ECO:0000315"/>
    <property type="project" value="dictyBase"/>
</dbReference>
<dbReference type="GO" id="GO:0043327">
    <property type="term" value="P:chemotaxis to cAMP"/>
    <property type="evidence" value="ECO:0000315"/>
    <property type="project" value="dictyBase"/>
</dbReference>
<dbReference type="GO" id="GO:0043326">
    <property type="term" value="P:chemotaxis to folate"/>
    <property type="evidence" value="ECO:0000315"/>
    <property type="project" value="dictyBase"/>
</dbReference>
<dbReference type="GO" id="GO:0031154">
    <property type="term" value="P:culmination involved in sorocarp development"/>
    <property type="evidence" value="ECO:0000315"/>
    <property type="project" value="UniProtKB"/>
</dbReference>
<dbReference type="GO" id="GO:0035556">
    <property type="term" value="P:intracellular signal transduction"/>
    <property type="evidence" value="ECO:0000315"/>
    <property type="project" value="dictyBase"/>
</dbReference>
<dbReference type="GO" id="GO:0000281">
    <property type="term" value="P:mitotic cytokinesis"/>
    <property type="evidence" value="ECO:0000315"/>
    <property type="project" value="dictyBase"/>
</dbReference>
<dbReference type="GO" id="GO:0000022">
    <property type="term" value="P:mitotic spindle elongation"/>
    <property type="evidence" value="ECO:0000315"/>
    <property type="project" value="dictyBase"/>
</dbReference>
<dbReference type="GO" id="GO:0010628">
    <property type="term" value="P:positive regulation of gene expression"/>
    <property type="evidence" value="ECO:0000315"/>
    <property type="project" value="dictyBase"/>
</dbReference>
<dbReference type="GO" id="GO:0051897">
    <property type="term" value="P:positive regulation of phosphatidylinositol 3-kinase/protein kinase B signal transduction"/>
    <property type="evidence" value="ECO:0000315"/>
    <property type="project" value="dictyBase"/>
</dbReference>
<dbReference type="GO" id="GO:0046827">
    <property type="term" value="P:positive regulation of protein export from nucleus"/>
    <property type="evidence" value="ECO:0000314"/>
    <property type="project" value="dictyBase"/>
</dbReference>
<dbReference type="GO" id="GO:1904515">
    <property type="term" value="P:positive regulation of TORC2 signaling"/>
    <property type="evidence" value="ECO:0000314"/>
    <property type="project" value="dictyBase"/>
</dbReference>
<dbReference type="GO" id="GO:0060176">
    <property type="term" value="P:regulation of aggregation involved in sorocarp development"/>
    <property type="evidence" value="ECO:0000315"/>
    <property type="project" value="dictyBase"/>
</dbReference>
<dbReference type="GO" id="GO:0030155">
    <property type="term" value="P:regulation of cell adhesion"/>
    <property type="evidence" value="ECO:0000304"/>
    <property type="project" value="dictyBase"/>
</dbReference>
<dbReference type="GO" id="GO:0043520">
    <property type="term" value="P:regulation of myosin II filament assembly"/>
    <property type="evidence" value="ECO:0000315"/>
    <property type="project" value="dictyBase"/>
</dbReference>
<dbReference type="GO" id="GO:0061118">
    <property type="term" value="P:regulation of positive chemotaxis to cAMP"/>
    <property type="evidence" value="ECO:0000315"/>
    <property type="project" value="dictyBase"/>
</dbReference>
<dbReference type="GO" id="GO:1904776">
    <property type="term" value="P:regulation of protein localization to cell cortex"/>
    <property type="evidence" value="ECO:0000315"/>
    <property type="project" value="dictyBase"/>
</dbReference>
<dbReference type="GO" id="GO:0007165">
    <property type="term" value="P:signal transduction"/>
    <property type="evidence" value="ECO:0000315"/>
    <property type="project" value="dictyBase"/>
</dbReference>
<dbReference type="GO" id="GO:0031288">
    <property type="term" value="P:sorocarp morphogenesis"/>
    <property type="evidence" value="ECO:0000315"/>
    <property type="project" value="dictyBase"/>
</dbReference>
<dbReference type="GO" id="GO:0030435">
    <property type="term" value="P:sporulation resulting in formation of a cellular spore"/>
    <property type="evidence" value="ECO:0000315"/>
    <property type="project" value="UniProtKB"/>
</dbReference>
<dbReference type="GO" id="GO:0031929">
    <property type="term" value="P:TOR signaling"/>
    <property type="evidence" value="ECO:0000315"/>
    <property type="project" value="dictyBase"/>
</dbReference>
<dbReference type="CDD" id="cd14137">
    <property type="entry name" value="STKc_GSK3"/>
    <property type="match status" value="1"/>
</dbReference>
<dbReference type="FunFam" id="3.30.200.20:FF:000009">
    <property type="entry name" value="Glycogen synthase kinase-3 beta"/>
    <property type="match status" value="1"/>
</dbReference>
<dbReference type="FunFam" id="1.10.510.10:FF:000082">
    <property type="entry name" value="Shaggy-related protein kinase kappa"/>
    <property type="match status" value="1"/>
</dbReference>
<dbReference type="Gene3D" id="3.30.200.20">
    <property type="entry name" value="Phosphorylase Kinase, domain 1"/>
    <property type="match status" value="1"/>
</dbReference>
<dbReference type="Gene3D" id="1.10.510.10">
    <property type="entry name" value="Transferase(Phosphotransferase) domain 1"/>
    <property type="match status" value="1"/>
</dbReference>
<dbReference type="InterPro" id="IPR050591">
    <property type="entry name" value="GSK-3"/>
</dbReference>
<dbReference type="InterPro" id="IPR011009">
    <property type="entry name" value="Kinase-like_dom_sf"/>
</dbReference>
<dbReference type="InterPro" id="IPR000719">
    <property type="entry name" value="Prot_kinase_dom"/>
</dbReference>
<dbReference type="InterPro" id="IPR017441">
    <property type="entry name" value="Protein_kinase_ATP_BS"/>
</dbReference>
<dbReference type="InterPro" id="IPR008271">
    <property type="entry name" value="Ser/Thr_kinase_AS"/>
</dbReference>
<dbReference type="InterPro" id="IPR039192">
    <property type="entry name" value="STKc_GSK3"/>
</dbReference>
<dbReference type="PANTHER" id="PTHR24057">
    <property type="entry name" value="GLYCOGEN SYNTHASE KINASE-3 ALPHA"/>
    <property type="match status" value="1"/>
</dbReference>
<dbReference type="PANTHER" id="PTHR24057:SF0">
    <property type="entry name" value="PROTEIN KINASE SHAGGY-RELATED"/>
    <property type="match status" value="1"/>
</dbReference>
<dbReference type="Pfam" id="PF00069">
    <property type="entry name" value="Pkinase"/>
    <property type="match status" value="1"/>
</dbReference>
<dbReference type="SMART" id="SM00220">
    <property type="entry name" value="S_TKc"/>
    <property type="match status" value="1"/>
</dbReference>
<dbReference type="SUPFAM" id="SSF56112">
    <property type="entry name" value="Protein kinase-like (PK-like)"/>
    <property type="match status" value="1"/>
</dbReference>
<dbReference type="PROSITE" id="PS00107">
    <property type="entry name" value="PROTEIN_KINASE_ATP"/>
    <property type="match status" value="1"/>
</dbReference>
<dbReference type="PROSITE" id="PS50011">
    <property type="entry name" value="PROTEIN_KINASE_DOM"/>
    <property type="match status" value="1"/>
</dbReference>
<dbReference type="PROSITE" id="PS00108">
    <property type="entry name" value="PROTEIN_KINASE_ST"/>
    <property type="match status" value="1"/>
</dbReference>
<sequence>MSSKDQILEKDKKETDDNGNKKTTTTTSSSSSSSSSSKPRSNKFDKVIIKSNGVCYITEGVIGNGSFGVVTQAIVADTKEVVAIKKVLQDQRYKNRELQIMKMLNHINIVSLKNSFYTSDNDEVYLNLVLEYVPDTVYRVSRHYSMSKQPVPNIFVKLYIYQLCRSINYIHSLGICHRDIKPQNLLLDTSTSTLKLCDFGSAKILIKGETNVSYICSRHYRAPELIFGSTNYTTTIDVWSLGCVLAELLLGQPLFPGENGIDQLVEIIKVLGTPTKEQIHAMNPYYTSFKFPEIKANPWPRVFKAKDVPAESIDLISKILLYDPSSRLKPVEICAHPFFDELRDPKTCLPDGKPLPPLFNFTIAEQTSIGPKLAKTLIPSHAMNQIELPSPLFPNLAISSSNQSSSSNSNANVSSNLNSHSASPSTTSSSSSTPNSIPVQSPSTTNTTSSTTNNTTTTTTTTTTSNH</sequence>
<accession>P51136</accession>
<accession>Q55A28</accession>
<accession>Q86KY0</accession>
<protein>
    <recommendedName>
        <fullName>Glycogen synthase kinase-3</fullName>
        <shortName>GSK-3</shortName>
        <ecNumber>2.7.11.26</ecNumber>
    </recommendedName>
</protein>
<organism>
    <name type="scientific">Dictyostelium discoideum</name>
    <name type="common">Social amoeba</name>
    <dbReference type="NCBI Taxonomy" id="44689"/>
    <lineage>
        <taxon>Eukaryota</taxon>
        <taxon>Amoebozoa</taxon>
        <taxon>Evosea</taxon>
        <taxon>Eumycetozoa</taxon>
        <taxon>Dictyostelia</taxon>
        <taxon>Dictyosteliales</taxon>
        <taxon>Dictyosteliaceae</taxon>
        <taxon>Dictyostelium</taxon>
    </lineage>
</organism>
<comment type="function">
    <text evidence="4 6 7 8 9 11 13">During cellular differentiation, may mediate an extracellular cyclic AMP stimulated signal transduction pathway that regulates prespore and prestalk B-cell proportions through inhibition of stalk cell formation and induction of prespore cell differentiation. The cAMP receptor carC appears to activate gskA via the tyrosine kinases zakA and zak2, to stimulate prespore differentiation, while carD appears to negatively regulate gskA, to promote prestalk formation.</text>
</comment>
<comment type="catalytic activity">
    <reaction evidence="5 10 12">
        <text>L-seryl-[tau protein] + ATP = O-phospho-L-seryl-[tau protein] + ADP + H(+)</text>
        <dbReference type="Rhea" id="RHEA:12801"/>
        <dbReference type="Rhea" id="RHEA-COMP:13701"/>
        <dbReference type="Rhea" id="RHEA-COMP:13702"/>
        <dbReference type="ChEBI" id="CHEBI:15378"/>
        <dbReference type="ChEBI" id="CHEBI:29999"/>
        <dbReference type="ChEBI" id="CHEBI:30616"/>
        <dbReference type="ChEBI" id="CHEBI:83421"/>
        <dbReference type="ChEBI" id="CHEBI:456216"/>
        <dbReference type="EC" id="2.7.11.26"/>
    </reaction>
</comment>
<comment type="catalytic activity">
    <reaction evidence="5 10 12">
        <text>L-threonyl-[tau protein] + ATP = O-phospho-L-threonyl-[tau protein] + ADP + H(+)</text>
        <dbReference type="Rhea" id="RHEA:53904"/>
        <dbReference type="Rhea" id="RHEA-COMP:13703"/>
        <dbReference type="Rhea" id="RHEA-COMP:13704"/>
        <dbReference type="ChEBI" id="CHEBI:15378"/>
        <dbReference type="ChEBI" id="CHEBI:30013"/>
        <dbReference type="ChEBI" id="CHEBI:30616"/>
        <dbReference type="ChEBI" id="CHEBI:61977"/>
        <dbReference type="ChEBI" id="CHEBI:456216"/>
        <dbReference type="EC" id="2.7.11.26"/>
    </reaction>
</comment>
<comment type="cofactor">
    <cofactor evidence="5">
        <name>Mg(2+)</name>
        <dbReference type="ChEBI" id="CHEBI:18420"/>
    </cofactor>
</comment>
<comment type="activity regulation">
    <text>Inhibited by lithium. Lithium inhibition is competitive with respect to magnesium but non-competitive with respect to the peptide substrate.</text>
</comment>
<comment type="developmental stage">
    <text evidence="13">Expressed in growing cells and throughout development. Levels increase during mound formation (12 hours) and peak at approximately twice the level seen in growing cells before decreasing again at the start of culmination (16 hours).</text>
</comment>
<comment type="disruption phenotype">
    <text evidence="7 9">Cells grow normally in both axenic medium and with bacteria. Under starvation conditions, mutants lacking gskA aggregate more quickly and form smaller mounds than wild type, fail to form slugs and take longer than wild type to reach culmination. At culmination, mutants lacking gskA form abnormal fruiting bodies characterized by an unusually large mound-like basal disk. Prestalk B (pstB) cells are formed at the expense of prespore cells, and the proportion of gskA null cells that differentiate into spores is greatly reduced when compared to wild-type cells.</text>
</comment>
<comment type="similarity">
    <text evidence="14">Belongs to the protein kinase superfamily. CMGC Ser/Thr protein kinase family. GSK-3 subfamily.</text>
</comment>
<feature type="chain" id="PRO_0000085983" description="Glycogen synthase kinase-3">
    <location>
        <begin position="1"/>
        <end position="467"/>
    </location>
</feature>
<feature type="domain" description="Protein kinase" evidence="1">
    <location>
        <begin position="56"/>
        <end position="339"/>
    </location>
</feature>
<feature type="region of interest" description="Disordered" evidence="3">
    <location>
        <begin position="1"/>
        <end position="42"/>
    </location>
</feature>
<feature type="region of interest" description="Disordered" evidence="3">
    <location>
        <begin position="400"/>
        <end position="467"/>
    </location>
</feature>
<feature type="compositionally biased region" description="Basic and acidic residues" evidence="3">
    <location>
        <begin position="1"/>
        <end position="20"/>
    </location>
</feature>
<feature type="compositionally biased region" description="Low complexity" evidence="3">
    <location>
        <begin position="23"/>
        <end position="37"/>
    </location>
</feature>
<feature type="active site" description="Proton acceptor" evidence="1 2">
    <location>
        <position position="179"/>
    </location>
</feature>
<feature type="binding site" evidence="1">
    <location>
        <begin position="62"/>
        <end position="70"/>
    </location>
    <ligand>
        <name>ATP</name>
        <dbReference type="ChEBI" id="CHEBI:30616"/>
    </ligand>
</feature>
<feature type="binding site">
    <location>
        <position position="85"/>
    </location>
    <ligand>
        <name>ATP</name>
        <dbReference type="ChEBI" id="CHEBI:30616"/>
    </ligand>
</feature>
<feature type="modified residue" description="Phosphotyrosine; by zakA" evidence="6">
    <location>
        <position position="214"/>
    </location>
</feature>
<feature type="modified residue" description="Phosphotyrosine; by zakA" evidence="6">
    <location>
        <position position="220"/>
    </location>
</feature>
<feature type="mutagenesis site" description="Inactive kinase." evidence="6">
    <original>K</original>
    <variation>M</variation>
    <location>
        <position position="85"/>
    </location>
</feature>
<feature type="mutagenesis site" description="Inactive kinase." evidence="6">
    <original>K</original>
    <variation>M</variation>
    <location>
        <position position="86"/>
    </location>
</feature>
<feature type="mutagenesis site" description="Not phosphorylated or activated by zakA." evidence="6">
    <original>Y</original>
    <variation>F</variation>
    <location>
        <position position="214"/>
    </location>
</feature>
<feature type="mutagenesis site" description="Not phosphorylated or activated by zakA." evidence="6">
    <original>Y</original>
    <variation>F</variation>
    <location>
        <position position="220"/>
    </location>
</feature>
<name>GSK3_DICDI</name>
<evidence type="ECO:0000255" key="1">
    <source>
        <dbReference type="PROSITE-ProRule" id="PRU00159"/>
    </source>
</evidence>
<evidence type="ECO:0000255" key="2">
    <source>
        <dbReference type="PROSITE-ProRule" id="PRU10027"/>
    </source>
</evidence>
<evidence type="ECO:0000256" key="3">
    <source>
        <dbReference type="SAM" id="MobiDB-lite"/>
    </source>
</evidence>
<evidence type="ECO:0000269" key="4">
    <source>
    </source>
</evidence>
<evidence type="ECO:0000269" key="5">
    <source>
    </source>
</evidence>
<evidence type="ECO:0000269" key="6">
    <source>
    </source>
</evidence>
<evidence type="ECO:0000269" key="7">
    <source>
    </source>
</evidence>
<evidence type="ECO:0000269" key="8">
    <source>
    </source>
</evidence>
<evidence type="ECO:0000269" key="9">
    <source>
    </source>
</evidence>
<evidence type="ECO:0000269" key="10">
    <source>
    </source>
</evidence>
<evidence type="ECO:0000269" key="11">
    <source>
    </source>
</evidence>
<evidence type="ECO:0000269" key="12">
    <source>
    </source>
</evidence>
<evidence type="ECO:0000269" key="13">
    <source>
    </source>
</evidence>
<evidence type="ECO:0000305" key="14"/>
<keyword id="KW-0067">ATP-binding</keyword>
<keyword id="KW-0418">Kinase</keyword>
<keyword id="KW-0547">Nucleotide-binding</keyword>
<keyword id="KW-0597">Phosphoprotein</keyword>
<keyword id="KW-1185">Reference proteome</keyword>
<keyword id="KW-0723">Serine/threonine-protein kinase</keyword>
<keyword id="KW-0808">Transferase</keyword>